<name>IF4E2_MAIZE</name>
<accession>O81482</accession>
<organism>
    <name type="scientific">Zea mays</name>
    <name type="common">Maize</name>
    <dbReference type="NCBI Taxonomy" id="4577"/>
    <lineage>
        <taxon>Eukaryota</taxon>
        <taxon>Viridiplantae</taxon>
        <taxon>Streptophyta</taxon>
        <taxon>Embryophyta</taxon>
        <taxon>Tracheophyta</taxon>
        <taxon>Spermatophyta</taxon>
        <taxon>Magnoliopsida</taxon>
        <taxon>Liliopsida</taxon>
        <taxon>Poales</taxon>
        <taxon>Poaceae</taxon>
        <taxon>PACMAD clade</taxon>
        <taxon>Panicoideae</taxon>
        <taxon>Andropogonodae</taxon>
        <taxon>Andropogoneae</taxon>
        <taxon>Tripsacinae</taxon>
        <taxon>Zea</taxon>
    </lineage>
</organism>
<protein>
    <recommendedName>
        <fullName>Eukaryotic translation initiation factor isoform 4E-2</fullName>
        <shortName>eIF(iso)-4E-2</shortName>
        <shortName>eIF(iso)4E-2</shortName>
    </recommendedName>
    <alternativeName>
        <fullName>eIF-(iso)4F 25 kDa subunit</fullName>
    </alternativeName>
    <alternativeName>
        <fullName>eIF-(iso)4F p28 subunit</fullName>
    </alternativeName>
    <alternativeName>
        <fullName>mRNA cap-binding protein</fullName>
    </alternativeName>
</protein>
<feature type="chain" id="PRO_0000193659" description="Eukaryotic translation initiation factor isoform 4E-2">
    <location>
        <begin position="1"/>
        <end position="216"/>
    </location>
</feature>
<feature type="region of interest" description="Disordered" evidence="2">
    <location>
        <begin position="1"/>
        <end position="23"/>
    </location>
</feature>
<feature type="disulfide bond" evidence="1">
    <location>
        <begin position="113"/>
        <end position="152"/>
    </location>
</feature>
<evidence type="ECO:0000250" key="1"/>
<evidence type="ECO:0000256" key="2">
    <source>
        <dbReference type="SAM" id="MobiDB-lite"/>
    </source>
</evidence>
<evidence type="ECO:0000305" key="3"/>
<keyword id="KW-1015">Disulfide bond</keyword>
<keyword id="KW-0396">Initiation factor</keyword>
<keyword id="KW-0648">Protein biosynthesis</keyword>
<keyword id="KW-1185">Reference proteome</keyword>
<keyword id="KW-0694">RNA-binding</keyword>
<keyword id="KW-0810">Translation regulation</keyword>
<sequence length="216" mass="24104">MAEVEAPATAVEAPAAAVATTTPEVAAPEAGAATEAKGPHKLHRQWTFWYDIQTKTKSGAAWGTSLKKAYTFDTVEEFWSMYDQIFRPSKLSGNADFHLFKAGVEPKWEDPECANGGKWTVPCNRKATFETMWLETLMALIGEQFDETEDICGIVASVRARGDKLALWTRTASNEAVQVNIGKKWKDVIDYNDKITYTFHDDSKRDKPSRGGRYTV</sequence>
<dbReference type="EMBL" id="AF076955">
    <property type="protein sequence ID" value="AAC27715.1"/>
    <property type="molecule type" value="mRNA"/>
</dbReference>
<dbReference type="PIR" id="T01687">
    <property type="entry name" value="T01687"/>
</dbReference>
<dbReference type="RefSeq" id="NP_001104917.1">
    <property type="nucleotide sequence ID" value="NM_001111447.2"/>
</dbReference>
<dbReference type="SMR" id="O81482"/>
<dbReference type="FunCoup" id="O81482">
    <property type="interactions" value="3540"/>
</dbReference>
<dbReference type="STRING" id="4577.O81482"/>
<dbReference type="PaxDb" id="4577-GRMZM2G022019_P01"/>
<dbReference type="EnsemblPlants" id="Zm00001eb222060_T001">
    <property type="protein sequence ID" value="Zm00001eb222060_P001"/>
    <property type="gene ID" value="Zm00001eb222060"/>
</dbReference>
<dbReference type="EnsemblPlants" id="Zm00001eb222060_T002">
    <property type="protein sequence ID" value="Zm00001eb222060_P002"/>
    <property type="gene ID" value="Zm00001eb222060"/>
</dbReference>
<dbReference type="GeneID" id="541708"/>
<dbReference type="Gramene" id="Zm00001eb222060_T001">
    <property type="protein sequence ID" value="Zm00001eb222060_P001"/>
    <property type="gene ID" value="Zm00001eb222060"/>
</dbReference>
<dbReference type="Gramene" id="Zm00001eb222060_T002">
    <property type="protein sequence ID" value="Zm00001eb222060_P002"/>
    <property type="gene ID" value="Zm00001eb222060"/>
</dbReference>
<dbReference type="KEGG" id="zma:541708"/>
<dbReference type="eggNOG" id="KOG1670">
    <property type="taxonomic scope" value="Eukaryota"/>
</dbReference>
<dbReference type="HOGENOM" id="CLU_043552_2_1_1"/>
<dbReference type="InParanoid" id="O81482"/>
<dbReference type="OMA" id="EEFWAIV"/>
<dbReference type="OrthoDB" id="590761at2759"/>
<dbReference type="Proteomes" id="UP000007305">
    <property type="component" value="Chromosome 5"/>
</dbReference>
<dbReference type="ExpressionAtlas" id="O81482">
    <property type="expression patterns" value="baseline and differential"/>
</dbReference>
<dbReference type="GO" id="GO:0016281">
    <property type="term" value="C:eukaryotic translation initiation factor 4F complex"/>
    <property type="evidence" value="ECO:0000318"/>
    <property type="project" value="GO_Central"/>
</dbReference>
<dbReference type="GO" id="GO:0000340">
    <property type="term" value="F:RNA 7-methylguanosine cap binding"/>
    <property type="evidence" value="ECO:0000318"/>
    <property type="project" value="GO_Central"/>
</dbReference>
<dbReference type="GO" id="GO:0003743">
    <property type="term" value="F:translation initiation factor activity"/>
    <property type="evidence" value="ECO:0000318"/>
    <property type="project" value="GO_Central"/>
</dbReference>
<dbReference type="GO" id="GO:0006417">
    <property type="term" value="P:regulation of translation"/>
    <property type="evidence" value="ECO:0007669"/>
    <property type="project" value="UniProtKB-KW"/>
</dbReference>
<dbReference type="GO" id="GO:0006413">
    <property type="term" value="P:translational initiation"/>
    <property type="evidence" value="ECO:0000318"/>
    <property type="project" value="GO_Central"/>
</dbReference>
<dbReference type="FunFam" id="3.30.760.10:FF:000003">
    <property type="entry name" value="Eukaryotic translation initiation factor 4E"/>
    <property type="match status" value="1"/>
</dbReference>
<dbReference type="Gene3D" id="3.30.760.10">
    <property type="entry name" value="RNA Cap, Translation Initiation Factor Eif4e"/>
    <property type="match status" value="1"/>
</dbReference>
<dbReference type="InterPro" id="IPR023398">
    <property type="entry name" value="TIF_eIF4e-like"/>
</dbReference>
<dbReference type="InterPro" id="IPR001040">
    <property type="entry name" value="TIF_eIF_4E"/>
</dbReference>
<dbReference type="InterPro" id="IPR019770">
    <property type="entry name" value="TIF_eIF_4E_CS"/>
</dbReference>
<dbReference type="PANTHER" id="PTHR11960">
    <property type="entry name" value="EUKARYOTIC TRANSLATION INITIATION FACTOR 4E RELATED"/>
    <property type="match status" value="1"/>
</dbReference>
<dbReference type="PANTHER" id="PTHR11960:SF60">
    <property type="entry name" value="EUKARYOTIC TRANSLATION INITIATION FACTOR ISOFORM 4E-2"/>
    <property type="match status" value="1"/>
</dbReference>
<dbReference type="Pfam" id="PF01652">
    <property type="entry name" value="IF4E"/>
    <property type="match status" value="1"/>
</dbReference>
<dbReference type="SUPFAM" id="SSF55418">
    <property type="entry name" value="eIF4e-like"/>
    <property type="match status" value="1"/>
</dbReference>
<dbReference type="PROSITE" id="PS00813">
    <property type="entry name" value="IF4E"/>
    <property type="match status" value="1"/>
</dbReference>
<reference key="1">
    <citation type="journal article" date="1999" name="Plant J.">
        <title>Oxygen deprivation stimulates Ca2+-mediated phosphorylation of mRNA cap-binding protein eIF4E in maize roots.</title>
        <authorList>
            <person name="Manjunath S."/>
            <person name="Williams A.J."/>
            <person name="Bailey-Serres J."/>
        </authorList>
    </citation>
    <scope>NUCLEOTIDE SEQUENCE [MRNA]</scope>
    <source>
        <tissue>Root</tissue>
    </source>
</reference>
<comment type="function">
    <text>Recognizes and binds the 7-methylguanosine-containing mRNA cap during an early step in the initiation of protein synthesis and facilitates ribosome binding by inducing the unwinding of the mRNAs secondary structures.</text>
</comment>
<comment type="subunit">
    <text>EIF4F is a multi-subunit complex, the composition of which varies with external and internal environmental conditions. It is composed of at least EIF4A, EIF4E and EIF4G. EIF4E is also known to interact with other partners. In higher plants two isoforms of EIF4F have been identified, named isoform EIF4F and isoform EIF(iso)4F. Isoform EIF4F has subunits p220 and p26, whereas isoform EIF(iso)4F has subunits p82 and p28.</text>
</comment>
<comment type="PTM">
    <text evidence="1">According to the redox status, the Cys-113-Cys-152 disulfide bridge may have a role in regulating protein function by affecting its ability to bind capped mRNA.</text>
</comment>
<comment type="similarity">
    <text evidence="3">Belongs to the eukaryotic initiation factor 4E family.</text>
</comment>
<proteinExistence type="evidence at transcript level"/>